<dbReference type="EMBL" id="X17403">
    <property type="protein sequence ID" value="CAA35376.1"/>
    <property type="molecule type" value="Genomic_DNA"/>
</dbReference>
<dbReference type="PIR" id="S09824">
    <property type="entry name" value="S09824"/>
</dbReference>
<dbReference type="Proteomes" id="UP000008991">
    <property type="component" value="Segment"/>
</dbReference>
<feature type="chain" id="PRO_0000115331" description="Uncharacterized protein UL61">
    <location>
        <begin position="1"/>
        <end position="431"/>
    </location>
</feature>
<feature type="region of interest" description="Disordered" evidence="1">
    <location>
        <begin position="17"/>
        <end position="66"/>
    </location>
</feature>
<feature type="region of interest" description="Disordered" evidence="1">
    <location>
        <begin position="81"/>
        <end position="415"/>
    </location>
</feature>
<feature type="compositionally biased region" description="Basic and acidic residues" evidence="1">
    <location>
        <begin position="91"/>
        <end position="106"/>
    </location>
</feature>
<feature type="compositionally biased region" description="Basic residues" evidence="1">
    <location>
        <begin position="173"/>
        <end position="195"/>
    </location>
</feature>
<feature type="compositionally biased region" description="Low complexity" evidence="1">
    <location>
        <begin position="235"/>
        <end position="244"/>
    </location>
</feature>
<feature type="compositionally biased region" description="Gly residues" evidence="1">
    <location>
        <begin position="299"/>
        <end position="312"/>
    </location>
</feature>
<feature type="compositionally biased region" description="Low complexity" evidence="1">
    <location>
        <begin position="317"/>
        <end position="342"/>
    </location>
</feature>
<feature type="compositionally biased region" description="Gly residues" evidence="1">
    <location>
        <begin position="343"/>
        <end position="360"/>
    </location>
</feature>
<protein>
    <recommendedName>
        <fullName>Uncharacterized protein UL61</fullName>
    </recommendedName>
</protein>
<accession>P16818</accession>
<gene>
    <name type="primary">UL61</name>
</gene>
<proteinExistence type="predicted"/>
<name>UL61_HCMVA</name>
<organismHost>
    <name type="scientific">Homo sapiens</name>
    <name type="common">Human</name>
    <dbReference type="NCBI Taxonomy" id="9606"/>
</organismHost>
<reference key="1">
    <citation type="journal article" date="1990" name="Curr. Top. Microbiol. Immunol.">
        <title>Analysis of the protein-coding content of the sequence of human cytomegalovirus strain AD169.</title>
        <authorList>
            <person name="Chee M.S."/>
            <person name="Bankier A.T."/>
            <person name="Beck S."/>
            <person name="Bohni R."/>
            <person name="Brown C.M."/>
            <person name="Cerny R."/>
            <person name="Horsnell T."/>
            <person name="Hutchison C.A. III"/>
            <person name="Kouzarides T."/>
            <person name="Martignetti J.A."/>
            <person name="Preddie E."/>
            <person name="Satchwell S.C."/>
            <person name="Tomlinson P."/>
            <person name="Weston K.M."/>
            <person name="Barrell B.G."/>
        </authorList>
    </citation>
    <scope>NUCLEOTIDE SEQUENCE [LARGE SCALE GENOMIC DNA]</scope>
</reference>
<evidence type="ECO:0000256" key="1">
    <source>
        <dbReference type="SAM" id="MobiDB-lite"/>
    </source>
</evidence>
<organism>
    <name type="scientific">Human cytomegalovirus (strain AD169)</name>
    <name type="common">HHV-5</name>
    <name type="synonym">Human herpesvirus 5</name>
    <dbReference type="NCBI Taxonomy" id="10360"/>
    <lineage>
        <taxon>Viruses</taxon>
        <taxon>Duplodnaviria</taxon>
        <taxon>Heunggongvirae</taxon>
        <taxon>Peploviricota</taxon>
        <taxon>Herviviricetes</taxon>
        <taxon>Herpesvirales</taxon>
        <taxon>Orthoherpesviridae</taxon>
        <taxon>Betaherpesvirinae</taxon>
        <taxon>Cytomegalovirus</taxon>
        <taxon>Cytomegalovirus humanbeta5</taxon>
        <taxon>Human cytomegalovirus</taxon>
    </lineage>
</organism>
<sequence length="431" mass="44310">LWRGVLTTIEVSWRPTVDPERFRPHPTSPPHRPAHTPQPGGVRGADPGWAADGGRGVGDHAQGQQAATVRAEFFWGAAGEGSVTGQANAQDKADREPAARPRDPRSRLAAGPSRGGRGAQPEPPRGSRRETRKPSRSTPLPELLTGPPAPNLPGPIAVEPGRRPSPPPSTRPTYRRRRPTAATPSRKKKARRGPKASKAGREGELGGGSPVAHRGTSLGTGVRDPAPRGGRGRARTPGPVHSAAGGPGSRRRSPGAARDPGPEPGEERGGGGKPPLGSPRATDGNRDPGAGVPARPGRRMGGSSGGRGGTPGRGPERAAPGARPTAPDGAPGRWDGPADGPAPGLGRGGWGVGREAGGSGRSVRTAARPEPCRGLRRGAAGTPGFIGFQMPRLGGRSGNFPPPRPMPGTGLALPRCGRPVEKYRRMRTAHI</sequence>